<protein>
    <recommendedName>
        <fullName evidence="1">tRNA pseudouridine synthase B</fullName>
        <ecNumber evidence="1">5.4.99.25</ecNumber>
    </recommendedName>
    <alternativeName>
        <fullName evidence="1">tRNA pseudouridine(55) synthase</fullName>
        <shortName evidence="1">Psi55 synthase</shortName>
    </alternativeName>
    <alternativeName>
        <fullName evidence="1">tRNA pseudouridylate synthase</fullName>
    </alternativeName>
    <alternativeName>
        <fullName evidence="1">tRNA-uridine isomerase</fullName>
    </alternativeName>
</protein>
<feature type="chain" id="PRO_0000121847" description="tRNA pseudouridine synthase B">
    <location>
        <begin position="1"/>
        <end position="297"/>
    </location>
</feature>
<feature type="active site" description="Nucleophile" evidence="1">
    <location>
        <position position="39"/>
    </location>
</feature>
<dbReference type="EC" id="5.4.99.25" evidence="1"/>
<dbReference type="EMBL" id="CP000033">
    <property type="protein sequence ID" value="AAV43086.1"/>
    <property type="molecule type" value="Genomic_DNA"/>
</dbReference>
<dbReference type="RefSeq" id="WP_003547805.1">
    <property type="nucleotide sequence ID" value="NC_006814.3"/>
</dbReference>
<dbReference type="RefSeq" id="YP_194117.1">
    <property type="nucleotide sequence ID" value="NC_006814.3"/>
</dbReference>
<dbReference type="SMR" id="Q5FJN8"/>
<dbReference type="STRING" id="272621.LBA1253"/>
<dbReference type="GeneID" id="93289657"/>
<dbReference type="KEGG" id="lac:LBA1253"/>
<dbReference type="PATRIC" id="fig|272621.13.peg.1188"/>
<dbReference type="eggNOG" id="COG0130">
    <property type="taxonomic scope" value="Bacteria"/>
</dbReference>
<dbReference type="HOGENOM" id="CLU_032087_0_1_9"/>
<dbReference type="OrthoDB" id="9802309at2"/>
<dbReference type="BioCyc" id="LACI272621:G1G49-1236-MONOMER"/>
<dbReference type="Proteomes" id="UP000006381">
    <property type="component" value="Chromosome"/>
</dbReference>
<dbReference type="GO" id="GO:0003723">
    <property type="term" value="F:RNA binding"/>
    <property type="evidence" value="ECO:0007669"/>
    <property type="project" value="InterPro"/>
</dbReference>
<dbReference type="GO" id="GO:0160148">
    <property type="term" value="F:tRNA pseudouridine(55) synthase activity"/>
    <property type="evidence" value="ECO:0007669"/>
    <property type="project" value="UniProtKB-EC"/>
</dbReference>
<dbReference type="GO" id="GO:1990481">
    <property type="term" value="P:mRNA pseudouridine synthesis"/>
    <property type="evidence" value="ECO:0007669"/>
    <property type="project" value="TreeGrafter"/>
</dbReference>
<dbReference type="GO" id="GO:0031119">
    <property type="term" value="P:tRNA pseudouridine synthesis"/>
    <property type="evidence" value="ECO:0007669"/>
    <property type="project" value="UniProtKB-UniRule"/>
</dbReference>
<dbReference type="CDD" id="cd02573">
    <property type="entry name" value="PseudoU_synth_EcTruB"/>
    <property type="match status" value="1"/>
</dbReference>
<dbReference type="Gene3D" id="3.30.2350.10">
    <property type="entry name" value="Pseudouridine synthase"/>
    <property type="match status" value="1"/>
</dbReference>
<dbReference type="HAMAP" id="MF_01080">
    <property type="entry name" value="TruB_bact"/>
    <property type="match status" value="1"/>
</dbReference>
<dbReference type="InterPro" id="IPR020103">
    <property type="entry name" value="PsdUridine_synth_cat_dom_sf"/>
</dbReference>
<dbReference type="InterPro" id="IPR002501">
    <property type="entry name" value="PsdUridine_synth_N"/>
</dbReference>
<dbReference type="InterPro" id="IPR014780">
    <property type="entry name" value="tRNA_psdUridine_synth_TruB"/>
</dbReference>
<dbReference type="InterPro" id="IPR032819">
    <property type="entry name" value="TruB_C"/>
</dbReference>
<dbReference type="NCBIfam" id="TIGR00431">
    <property type="entry name" value="TruB"/>
    <property type="match status" value="1"/>
</dbReference>
<dbReference type="PANTHER" id="PTHR13767:SF2">
    <property type="entry name" value="PSEUDOURIDYLATE SYNTHASE TRUB1"/>
    <property type="match status" value="1"/>
</dbReference>
<dbReference type="PANTHER" id="PTHR13767">
    <property type="entry name" value="TRNA-PSEUDOURIDINE SYNTHASE"/>
    <property type="match status" value="1"/>
</dbReference>
<dbReference type="Pfam" id="PF16198">
    <property type="entry name" value="TruB_C_2"/>
    <property type="match status" value="1"/>
</dbReference>
<dbReference type="Pfam" id="PF01509">
    <property type="entry name" value="TruB_N"/>
    <property type="match status" value="1"/>
</dbReference>
<dbReference type="SUPFAM" id="SSF55120">
    <property type="entry name" value="Pseudouridine synthase"/>
    <property type="match status" value="1"/>
</dbReference>
<gene>
    <name evidence="1" type="primary">truB</name>
    <name type="ordered locus">LBA1253</name>
</gene>
<accession>Q5FJN8</accession>
<reference key="1">
    <citation type="journal article" date="2005" name="Proc. Natl. Acad. Sci. U.S.A.">
        <title>Complete genome sequence of the probiotic lactic acid bacterium Lactobacillus acidophilus NCFM.</title>
        <authorList>
            <person name="Altermann E."/>
            <person name="Russell W.M."/>
            <person name="Azcarate-Peril M.A."/>
            <person name="Barrangou R."/>
            <person name="Buck B.L."/>
            <person name="McAuliffe O."/>
            <person name="Souther N."/>
            <person name="Dobson A."/>
            <person name="Duong T."/>
            <person name="Callanan M."/>
            <person name="Lick S."/>
            <person name="Hamrick A."/>
            <person name="Cano R."/>
            <person name="Klaenhammer T.R."/>
        </authorList>
    </citation>
    <scope>NUCLEOTIDE SEQUENCE [LARGE SCALE GENOMIC DNA]</scope>
    <source>
        <strain>ATCC 700396 / NCK56 / N2 / NCFM</strain>
    </source>
</reference>
<keyword id="KW-0413">Isomerase</keyword>
<keyword id="KW-1185">Reference proteome</keyword>
<keyword id="KW-0819">tRNA processing</keyword>
<evidence type="ECO:0000255" key="1">
    <source>
        <dbReference type="HAMAP-Rule" id="MF_01080"/>
    </source>
</evidence>
<comment type="function">
    <text evidence="1">Responsible for synthesis of pseudouridine from uracil-55 in the psi GC loop of transfer RNAs.</text>
</comment>
<comment type="catalytic activity">
    <reaction evidence="1">
        <text>uridine(55) in tRNA = pseudouridine(55) in tRNA</text>
        <dbReference type="Rhea" id="RHEA:42532"/>
        <dbReference type="Rhea" id="RHEA-COMP:10101"/>
        <dbReference type="Rhea" id="RHEA-COMP:10102"/>
        <dbReference type="ChEBI" id="CHEBI:65314"/>
        <dbReference type="ChEBI" id="CHEBI:65315"/>
        <dbReference type="EC" id="5.4.99.25"/>
    </reaction>
</comment>
<comment type="similarity">
    <text evidence="1">Belongs to the pseudouridine synthase TruB family. Type 1 subfamily.</text>
</comment>
<organism>
    <name type="scientific">Lactobacillus acidophilus (strain ATCC 700396 / NCK56 / N2 / NCFM)</name>
    <dbReference type="NCBI Taxonomy" id="272621"/>
    <lineage>
        <taxon>Bacteria</taxon>
        <taxon>Bacillati</taxon>
        <taxon>Bacillota</taxon>
        <taxon>Bacilli</taxon>
        <taxon>Lactobacillales</taxon>
        <taxon>Lactobacillaceae</taxon>
        <taxon>Lactobacillus</taxon>
    </lineage>
</organism>
<proteinExistence type="inferred from homology"/>
<name>TRUB_LACAC</name>
<sequence>MLNGIIVIDKDKGMTSADVVYHLRRALHIRKIGHAGTLDPEVTGVLPIAIGQATKLIELMHTRPKKYQGTGLFGYATDSYDIDGKVLKEKRLVMPFTVEEIQRGMNTFKGKIEQVPPIYSAVKVNGKHLYEYAREGIKVERPKRQVEIFQYDLLNDPSFDKEKGQESFDFEITCSKGTYVRSLVNDLGEKLDEPAVMTYLRRVASSGFDISQAVKLSEIEANPEKASELIQPIDAFFKDYETIDLPEGKWLKVKNGAGISLETNAKKVALRYNEKVKAIYEKKGKIYRPSLMLLQNE</sequence>